<sequence length="409" mass="42983">MLISNVGINPAAYLNNHSVENSSQTASQSVSAKDILNSIGISSSKVSDLGLSPTLSAPAPGVLTQTPGTITSFLKASIQNTDMNQDLNALANNVTTKANEVVQTQLREQQAEVGKFFDISGMSSSAVALLAAANTLMLTLNQADSKLSGKLSLVSFDAAKTTASSMMREGMNALSGSISQSALQLGITGVGAKLEYKGLQNERGALKHNAAKIDKLTTESHSIKNVLNGQNSVKLGAEGVDSLKSLNMKKTGTDATKNLNDATLKSNAGTSATESLGIKDSNKQISPEHQAILSKRLESVESDIRLEQNTMDMTRIDARKMQMTGDLIMKNSVTVGGIAGASGQYAATQERSEQQISQVNNRVASTASDEARESSRKSTSLIQEMLKTMESINQSKASALAAIAGNIRA</sequence>
<gene>
    <name evidence="11" type="primary">sctB1</name>
    <name evidence="9" type="synonym">sipC</name>
    <name type="synonym">sspC</name>
    <name type="ordered locus">STM2884</name>
</gene>
<organism>
    <name type="scientific">Salmonella typhimurium (strain LT2 / SGSC1412 / ATCC 700720)</name>
    <dbReference type="NCBI Taxonomy" id="99287"/>
    <lineage>
        <taxon>Bacteria</taxon>
        <taxon>Pseudomonadati</taxon>
        <taxon>Pseudomonadota</taxon>
        <taxon>Gammaproteobacteria</taxon>
        <taxon>Enterobacterales</taxon>
        <taxon>Enterobacteriaceae</taxon>
        <taxon>Salmonella</taxon>
    </lineage>
</organism>
<feature type="chain" id="PRO_0000219860" description="SPI-1 type 3 secretion system translocon protein SctB">
    <location>
        <begin position="1"/>
        <end position="409"/>
    </location>
</feature>
<feature type="transmembrane region" description="Helical" evidence="1">
    <location>
        <begin position="119"/>
        <end position="140"/>
    </location>
</feature>
<accession>P0CL47</accession>
<accession>Q56020</accession>
<accession>Q56025</accession>
<accession>Q7CPX1</accession>
<comment type="function">
    <text evidence="6">Component of the type III secretion system 1 (SPI-1 T3SS), also called injectisome, which is used to inject bacterial effector proteins into eukaryotic host cells (PubMed:23544147). SipB/SctE1 and SipC/SctB1 are inserted into the host membrane where they form a pore and allow the translocation of effector proteins into the cytosol of target cells (PubMed:23544147).</text>
</comment>
<comment type="function">
    <text evidence="2 4 5">Mediates the intimate attachment to target host cells (PubMed:19364837). Actin-binding protein that interferes with host cell actin cytoskeleton (PubMed:10487745, PubMed:11331579). Nucleates actin polymerization and condensates actin filaments into cables (bundling) (PubMed:10487745, PubMed:11331579). SipA potentiates SipC/SctB1 activity and both are required for an efficient bacterial internalization by the host cell (PubMed:11331579).</text>
</comment>
<comment type="subunit">
    <text evidence="6 7">The core secretion machinery of the T3SS is composed of approximately 20 different proteins, including cytoplasmic components, a base, an export apparatus and a needle (PubMed:30107569). This subunit is involved in the formation of a pore, called the translocon, in host membrane (PubMed:23544147). Interacts with SipB/SctE1 (PubMed:23544147).</text>
</comment>
<comment type="subcellular location">
    <subcellularLocation>
        <location evidence="3 8">Secreted</location>
    </subcellularLocation>
    <subcellularLocation>
        <location evidence="6">Host membrane</location>
        <topology evidence="1">Single-pass membrane protein</topology>
    </subcellularLocation>
    <text evidence="5 6 8">Secreted via the type III secretion system 1 (SPI-1 T3SS) (PubMed:7608068). Becomes surface exposed upon contact with host cells (PubMed:19364837). Inserted into the host cell membrane (PubMed:23544147).</text>
</comment>
<comment type="domain">
    <text evidence="2 6">The N-terminal region (SipC-N, 1-120) induces actin bundling (PubMed:10487745). The C-terminal region (SipC-C, 200-409) nucleates actin polymerization from barbed ends and enhances SipC-N induced actin bundling (PubMed:10487745). The C-terminal region (340-409) is required for SipB/SctE1-SipC/SctB1 complex formation (PubMed:23544147).</text>
</comment>
<comment type="disruption phenotype">
    <text evidence="5 6">Mutant can assemble a fully functional needle complex and can secrete (but cannot translocate) all proteins traveling the SPI-1 T3SS pathway, but the mutant is defective for intimate attachment (PubMed:19364837). Mutants that no longer interact with SipB/SctE1 are defective in translocon assembly in the host membrane (PubMed:23544147).</text>
</comment>
<comment type="similarity">
    <text evidence="10">Belongs to the SctB/SipC family.</text>
</comment>
<proteinExistence type="evidence at protein level"/>
<dbReference type="EMBL" id="AE006468">
    <property type="protein sequence ID" value="AAL21764.1"/>
    <property type="molecule type" value="Genomic_DNA"/>
</dbReference>
<dbReference type="RefSeq" id="NP_461805.1">
    <property type="nucleotide sequence ID" value="NC_003197.2"/>
</dbReference>
<dbReference type="RefSeq" id="WP_000909019.1">
    <property type="nucleotide sequence ID" value="NC_003197.2"/>
</dbReference>
<dbReference type="STRING" id="99287.STM2884"/>
<dbReference type="PaxDb" id="99287-STM2884"/>
<dbReference type="GeneID" id="1254407"/>
<dbReference type="KEGG" id="stm:STM2884"/>
<dbReference type="PATRIC" id="fig|99287.12.peg.3040"/>
<dbReference type="HOGENOM" id="CLU_055996_0_0_6"/>
<dbReference type="OMA" id="MEIQNTK"/>
<dbReference type="BioCyc" id="SENT99287:STM2884-MONOMER"/>
<dbReference type="Proteomes" id="UP000001014">
    <property type="component" value="Chromosome"/>
</dbReference>
<dbReference type="GO" id="GO:0005576">
    <property type="term" value="C:extracellular region"/>
    <property type="evidence" value="ECO:0007669"/>
    <property type="project" value="UniProtKB-SubCell"/>
</dbReference>
<dbReference type="GO" id="GO:0033644">
    <property type="term" value="C:host cell membrane"/>
    <property type="evidence" value="ECO:0007669"/>
    <property type="project" value="UniProtKB-SubCell"/>
</dbReference>
<dbReference type="GO" id="GO:0016020">
    <property type="term" value="C:membrane"/>
    <property type="evidence" value="ECO:0007669"/>
    <property type="project" value="UniProtKB-KW"/>
</dbReference>
<dbReference type="GO" id="GO:0003779">
    <property type="term" value="F:actin binding"/>
    <property type="evidence" value="ECO:0007669"/>
    <property type="project" value="UniProtKB-KW"/>
</dbReference>
<dbReference type="GO" id="GO:1903829">
    <property type="term" value="P:positive regulation of protein localization"/>
    <property type="evidence" value="ECO:0000250"/>
    <property type="project" value="UniProtKB"/>
</dbReference>
<dbReference type="InterPro" id="IPR005427">
    <property type="entry name" value="BipC/SctB"/>
</dbReference>
<dbReference type="NCBIfam" id="TIGR02101">
    <property type="entry name" value="IpaC_SipC"/>
    <property type="match status" value="1"/>
</dbReference>
<dbReference type="NCBIfam" id="NF011900">
    <property type="entry name" value="PRK15373.1"/>
    <property type="match status" value="1"/>
</dbReference>
<dbReference type="NCBIfam" id="NF038055">
    <property type="entry name" value="T3SS_SctB_pilot"/>
    <property type="match status" value="1"/>
</dbReference>
<dbReference type="Pfam" id="PF09599">
    <property type="entry name" value="IpaC_SipC"/>
    <property type="match status" value="1"/>
</dbReference>
<dbReference type="PRINTS" id="PR01608">
    <property type="entry name" value="BACINVASINC"/>
</dbReference>
<evidence type="ECO:0000255" key="1"/>
<evidence type="ECO:0000269" key="2">
    <source>
    </source>
</evidence>
<evidence type="ECO:0000269" key="3">
    <source>
    </source>
</evidence>
<evidence type="ECO:0000269" key="4">
    <source>
    </source>
</evidence>
<evidence type="ECO:0000269" key="5">
    <source>
    </source>
</evidence>
<evidence type="ECO:0000269" key="6">
    <source>
    </source>
</evidence>
<evidence type="ECO:0000269" key="7">
    <source>
    </source>
</evidence>
<evidence type="ECO:0000269" key="8">
    <source>
    </source>
</evidence>
<evidence type="ECO:0000303" key="9">
    <source>
    </source>
</evidence>
<evidence type="ECO:0000305" key="10"/>
<evidence type="ECO:0000305" key="11">
    <source>
    </source>
</evidence>
<name>SCTB1_SALTY</name>
<reference key="1">
    <citation type="journal article" date="2001" name="Nature">
        <title>Complete genome sequence of Salmonella enterica serovar Typhimurium LT2.</title>
        <authorList>
            <person name="McClelland M."/>
            <person name="Sanderson K.E."/>
            <person name="Spieth J."/>
            <person name="Clifton S.W."/>
            <person name="Latreille P."/>
            <person name="Courtney L."/>
            <person name="Porwollik S."/>
            <person name="Ali J."/>
            <person name="Dante M."/>
            <person name="Du F."/>
            <person name="Hou S."/>
            <person name="Layman D."/>
            <person name="Leonard S."/>
            <person name="Nguyen C."/>
            <person name="Scott K."/>
            <person name="Holmes A."/>
            <person name="Grewal N."/>
            <person name="Mulvaney E."/>
            <person name="Ryan E."/>
            <person name="Sun H."/>
            <person name="Florea L."/>
            <person name="Miller W."/>
            <person name="Stoneking T."/>
            <person name="Nhan M."/>
            <person name="Waterston R."/>
            <person name="Wilson R.K."/>
        </authorList>
    </citation>
    <scope>NUCLEOTIDE SEQUENCE [LARGE SCALE GENOMIC DNA]</scope>
    <source>
        <strain>LT2 / SGSC1412 / ATCC 700720</strain>
    </source>
</reference>
<reference key="2">
    <citation type="journal article" date="1995" name="J. Bacteriol.">
        <title>Homologs of the Shigella IpaB and IpaC invasins are required for Salmonella typhimurium entry into cultured epithelial cells.</title>
        <authorList>
            <person name="Kaniga K."/>
            <person name="Tucker S.C."/>
            <person name="Trollinger D."/>
            <person name="Galan J.E."/>
        </authorList>
    </citation>
    <scope>SUBCELLULAR LOCATION</scope>
    <source>
        <strain>SL1344</strain>
    </source>
</reference>
<reference key="3">
    <citation type="journal article" date="1999" name="EMBO J.">
        <title>Direct nucleation and bundling of actin by the SipC protein of invasive Salmonella.</title>
        <authorList>
            <person name="Hayward R.D."/>
            <person name="Koronakis V."/>
        </authorList>
    </citation>
    <scope>FUNCTION</scope>
    <scope>DOMAIN</scope>
    <source>
        <strain>SJW1103</strain>
    </source>
</reference>
<reference key="4">
    <citation type="journal article" date="2000" name="Mol. Microbiol.">
        <title>The Salmonella type III secretion translocon protein SspC is inserted into the epithelial cell plasma membrane upon infection.</title>
        <authorList>
            <person name="Scherer C.A."/>
            <person name="Cooper E."/>
            <person name="Miller S.I."/>
        </authorList>
    </citation>
    <scope>SUBCELLULAR LOCATION</scope>
    <source>
        <strain>ATCC 14028s / SGSG 2262</strain>
    </source>
</reference>
<reference key="5">
    <citation type="journal article" date="2001" name="EMBO J.">
        <title>Cooperation between actin-binding proteins of invasive Salmonella: SipA potentiates SipC nucleation and bundling of actin.</title>
        <authorList>
            <person name="McGhie E.J."/>
            <person name="Hayward R.D."/>
            <person name="Koronakis V."/>
        </authorList>
    </citation>
    <scope>FUNCTION</scope>
    <scope>COOPERATIVE INTERACTION WITH SIPA</scope>
    <source>
        <strain>SJW1103</strain>
    </source>
</reference>
<reference key="6">
    <citation type="journal article" date="2009" name="Infect. Immun.">
        <title>Salmonella enterica serovar typhimurium pathogenicity island 1-encoded type III secretion system translocases mediate intimate attachment to nonphagocytic cells.</title>
        <authorList>
            <person name="Lara-Tejero M."/>
            <person name="Galan J.E."/>
        </authorList>
    </citation>
    <scope>FUNCTION</scope>
    <scope>SUBCELLULAR LOCATION</scope>
    <scope>DISRUPTION PHENOTYPE</scope>
    <source>
        <strain>SL1344</strain>
    </source>
</reference>
<reference key="7">
    <citation type="journal article" date="2013" name="PLoS ONE">
        <title>SipB-SipC complex is essential for translocon formation.</title>
        <authorList>
            <person name="Myeni S.K."/>
            <person name="Wang L."/>
            <person name="Zhou D."/>
        </authorList>
    </citation>
    <scope>FUNCTION</scope>
    <scope>SUBUNIT</scope>
    <scope>INTERACTION WITH SIPB/SCTE</scope>
    <scope>SUBCELLULAR LOCATION</scope>
    <scope>DOMAIN</scope>
    <scope>DISRUPTION PHENOTYPE</scope>
</reference>
<reference key="8">
    <citation type="journal article" date="2018" name="FEMS Microbiol. Lett.">
        <title>Bacterial type III secretion systems: a complex device for the delivery of bacterial effector proteins into eukaryotic host cells.</title>
        <authorList>
            <person name="Wagner S."/>
            <person name="Grin I."/>
            <person name="Malmsheimer S."/>
            <person name="Singh N."/>
            <person name="Torres-Vargas C.E."/>
            <person name="Westerhausen S."/>
        </authorList>
    </citation>
    <scope>REVIEW</scope>
    <scope>NOMENCLATURE</scope>
    <scope>SUBUNIT</scope>
</reference>
<protein>
    <recommendedName>
        <fullName evidence="10">SPI-1 type 3 secretion system translocon protein SctB</fullName>
        <shortName evidence="10">SPI-1 T3SS translocon protein SctB</shortName>
    </recommendedName>
    <alternativeName>
        <fullName>Cell invasion protein SipC</fullName>
    </alternativeName>
    <alternativeName>
        <fullName>Effector protein SipC</fullName>
    </alternativeName>
</protein>
<keyword id="KW-0009">Actin-binding</keyword>
<keyword id="KW-1043">Host membrane</keyword>
<keyword id="KW-0472">Membrane</keyword>
<keyword id="KW-1185">Reference proteome</keyword>
<keyword id="KW-0964">Secreted</keyword>
<keyword id="KW-0812">Transmembrane</keyword>
<keyword id="KW-1133">Transmembrane helix</keyword>
<keyword id="KW-0843">Virulence</keyword>